<organism>
    <name type="scientific">Bacillus cereus (strain AH187)</name>
    <dbReference type="NCBI Taxonomy" id="405534"/>
    <lineage>
        <taxon>Bacteria</taxon>
        <taxon>Bacillati</taxon>
        <taxon>Bacillota</taxon>
        <taxon>Bacilli</taxon>
        <taxon>Bacillales</taxon>
        <taxon>Bacillaceae</taxon>
        <taxon>Bacillus</taxon>
        <taxon>Bacillus cereus group</taxon>
    </lineage>
</organism>
<comment type="function">
    <text evidence="1">Forms part of the ribosomal stalk, playing a central role in the interaction of the ribosome with GTP-bound translation factors.</text>
</comment>
<comment type="subunit">
    <text evidence="1">Part of the ribosomal stalk of the 50S ribosomal subunit. The N-terminus interacts with L11 and the large rRNA to form the base of the stalk. The C-terminus forms an elongated spine to which L12 dimers bind in a sequential fashion forming a multimeric L10(L12)X complex.</text>
</comment>
<comment type="similarity">
    <text evidence="1">Belongs to the universal ribosomal protein uL10 family.</text>
</comment>
<accession>B7HQT3</accession>
<keyword id="KW-0687">Ribonucleoprotein</keyword>
<keyword id="KW-0689">Ribosomal protein</keyword>
<keyword id="KW-0694">RNA-binding</keyword>
<keyword id="KW-0699">rRNA-binding</keyword>
<reference key="1">
    <citation type="submission" date="2008-10" db="EMBL/GenBank/DDBJ databases">
        <title>Genome sequence of Bacillus cereus AH187.</title>
        <authorList>
            <person name="Dodson R.J."/>
            <person name="Durkin A.S."/>
            <person name="Rosovitz M.J."/>
            <person name="Rasko D.A."/>
            <person name="Kolsto A.B."/>
            <person name="Okstad O.A."/>
            <person name="Ravel J."/>
            <person name="Sutton G."/>
        </authorList>
    </citation>
    <scope>NUCLEOTIDE SEQUENCE [LARGE SCALE GENOMIC DNA]</scope>
    <source>
        <strain>AH187</strain>
    </source>
</reference>
<sequence length="166" mass="18037">MSKVIETKQQVVTEIADKLRASKSTIVVDYRGLTVSEATELRKQLREAGVEFKVYKNSLTRRAAESAEMAELNEFLTGPNAIAFSNEDVVAPAKVLNDFAKDHEALEIKAGVIEGKLVTLDEVKAIATLPSREGLLSMLLSVLQAPIRNLALATKAVADQKEEQGA</sequence>
<dbReference type="EMBL" id="CP001177">
    <property type="protein sequence ID" value="ACJ78624.1"/>
    <property type="molecule type" value="Genomic_DNA"/>
</dbReference>
<dbReference type="SMR" id="B7HQT3"/>
<dbReference type="KEGG" id="bcr:BCAH187_A0130"/>
<dbReference type="HOGENOM" id="CLU_092227_2_0_9"/>
<dbReference type="Proteomes" id="UP000002214">
    <property type="component" value="Chromosome"/>
</dbReference>
<dbReference type="GO" id="GO:0015934">
    <property type="term" value="C:large ribosomal subunit"/>
    <property type="evidence" value="ECO:0007669"/>
    <property type="project" value="InterPro"/>
</dbReference>
<dbReference type="GO" id="GO:0070180">
    <property type="term" value="F:large ribosomal subunit rRNA binding"/>
    <property type="evidence" value="ECO:0007669"/>
    <property type="project" value="UniProtKB-UniRule"/>
</dbReference>
<dbReference type="GO" id="GO:0003735">
    <property type="term" value="F:structural constituent of ribosome"/>
    <property type="evidence" value="ECO:0007669"/>
    <property type="project" value="InterPro"/>
</dbReference>
<dbReference type="GO" id="GO:0006412">
    <property type="term" value="P:translation"/>
    <property type="evidence" value="ECO:0007669"/>
    <property type="project" value="UniProtKB-UniRule"/>
</dbReference>
<dbReference type="CDD" id="cd05797">
    <property type="entry name" value="Ribosomal_L10"/>
    <property type="match status" value="1"/>
</dbReference>
<dbReference type="FunFam" id="3.30.70.1730:FF:000001">
    <property type="entry name" value="50S ribosomal protein L10"/>
    <property type="match status" value="1"/>
</dbReference>
<dbReference type="Gene3D" id="3.30.70.1730">
    <property type="match status" value="1"/>
</dbReference>
<dbReference type="Gene3D" id="6.10.250.290">
    <property type="match status" value="1"/>
</dbReference>
<dbReference type="HAMAP" id="MF_00362">
    <property type="entry name" value="Ribosomal_uL10"/>
    <property type="match status" value="1"/>
</dbReference>
<dbReference type="InterPro" id="IPR001790">
    <property type="entry name" value="Ribosomal_uL10"/>
</dbReference>
<dbReference type="InterPro" id="IPR043141">
    <property type="entry name" value="Ribosomal_uL10-like_sf"/>
</dbReference>
<dbReference type="InterPro" id="IPR022973">
    <property type="entry name" value="Ribosomal_uL10_bac"/>
</dbReference>
<dbReference type="InterPro" id="IPR047865">
    <property type="entry name" value="Ribosomal_uL10_bac_type"/>
</dbReference>
<dbReference type="InterPro" id="IPR002363">
    <property type="entry name" value="Ribosomal_uL10_CS_bac"/>
</dbReference>
<dbReference type="NCBIfam" id="NF000955">
    <property type="entry name" value="PRK00099.1-1"/>
    <property type="match status" value="1"/>
</dbReference>
<dbReference type="PANTHER" id="PTHR11560">
    <property type="entry name" value="39S RIBOSOMAL PROTEIN L10, MITOCHONDRIAL"/>
    <property type="match status" value="1"/>
</dbReference>
<dbReference type="Pfam" id="PF00466">
    <property type="entry name" value="Ribosomal_L10"/>
    <property type="match status" value="1"/>
</dbReference>
<dbReference type="SUPFAM" id="SSF160369">
    <property type="entry name" value="Ribosomal protein L10-like"/>
    <property type="match status" value="1"/>
</dbReference>
<dbReference type="PROSITE" id="PS01109">
    <property type="entry name" value="RIBOSOMAL_L10"/>
    <property type="match status" value="1"/>
</dbReference>
<name>RL10_BACC7</name>
<protein>
    <recommendedName>
        <fullName evidence="1">Large ribosomal subunit protein uL10</fullName>
    </recommendedName>
    <alternativeName>
        <fullName evidence="2">50S ribosomal protein L10</fullName>
    </alternativeName>
</protein>
<evidence type="ECO:0000255" key="1">
    <source>
        <dbReference type="HAMAP-Rule" id="MF_00362"/>
    </source>
</evidence>
<evidence type="ECO:0000305" key="2"/>
<proteinExistence type="inferred from homology"/>
<feature type="chain" id="PRO_1000120916" description="Large ribosomal subunit protein uL10">
    <location>
        <begin position="1"/>
        <end position="166"/>
    </location>
</feature>
<gene>
    <name evidence="1" type="primary">rplJ</name>
    <name type="ordered locus">BCAH187_A0130</name>
</gene>